<feature type="chain" id="PRO_0000246652" description="Probable kinetochore protein NUF2">
    <location>
        <begin position="1"/>
        <end position="439"/>
    </location>
</feature>
<feature type="coiled-coil region" evidence="2">
    <location>
        <begin position="136"/>
        <end position="233"/>
    </location>
</feature>
<feature type="coiled-coil region" evidence="2">
    <location>
        <begin position="293"/>
        <end position="332"/>
    </location>
</feature>
<name>NUF2_ENCCU</name>
<comment type="function">
    <text evidence="1">Acts as a component of the essential kinetochore-associated NDC80 complex, which is required for chromosome segregation and spindle checkpoint activity.</text>
</comment>
<comment type="subunit">
    <text evidence="1">Component of the NDC80 complex, which consists of at least NDC80 and NUF2.</text>
</comment>
<comment type="subcellular location">
    <subcellularLocation>
        <location evidence="1">Nucleus</location>
    </subcellularLocation>
    <subcellularLocation>
        <location evidence="1">Chromosome</location>
        <location evidence="1">Centromere</location>
        <location evidence="1">Kinetochore</location>
    </subcellularLocation>
    <text evidence="1">Associated with kinetochores.</text>
</comment>
<comment type="similarity">
    <text evidence="3">Belongs to the NUF2 family.</text>
</comment>
<organism>
    <name type="scientific">Encephalitozoon cuniculi (strain GB-M1)</name>
    <name type="common">Microsporidian parasite</name>
    <dbReference type="NCBI Taxonomy" id="284813"/>
    <lineage>
        <taxon>Eukaryota</taxon>
        <taxon>Fungi</taxon>
        <taxon>Fungi incertae sedis</taxon>
        <taxon>Microsporidia</taxon>
        <taxon>Unikaryonidae</taxon>
        <taxon>Encephalitozoon</taxon>
    </lineage>
</organism>
<keyword id="KW-0131">Cell cycle</keyword>
<keyword id="KW-0132">Cell division</keyword>
<keyword id="KW-0137">Centromere</keyword>
<keyword id="KW-0158">Chromosome</keyword>
<keyword id="KW-0175">Coiled coil</keyword>
<keyword id="KW-0995">Kinetochore</keyword>
<keyword id="KW-0498">Mitosis</keyword>
<keyword id="KW-0539">Nucleus</keyword>
<keyword id="KW-1185">Reference proteome</keyword>
<dbReference type="EMBL" id="AL590451">
    <property type="protein sequence ID" value="CAD27141.1"/>
    <property type="molecule type" value="Genomic_DNA"/>
</dbReference>
<dbReference type="RefSeq" id="XP_955722.1">
    <property type="nucleotide sequence ID" value="XM_950629.1"/>
</dbReference>
<dbReference type="SMR" id="Q8SQK7"/>
<dbReference type="FunCoup" id="Q8SQK7">
    <property type="interactions" value="23"/>
</dbReference>
<dbReference type="STRING" id="284813.Q8SQK7"/>
<dbReference type="VEuPathDB" id="MicrosporidiaDB:ECU09_1690"/>
<dbReference type="HOGENOM" id="CLU_025461_1_1_1"/>
<dbReference type="InParanoid" id="Q8SQK7"/>
<dbReference type="OMA" id="YLKMEAH"/>
<dbReference type="OrthoDB" id="8194677at2759"/>
<dbReference type="Proteomes" id="UP000000819">
    <property type="component" value="Chromosome IX"/>
</dbReference>
<dbReference type="GO" id="GO:0031262">
    <property type="term" value="C:Ndc80 complex"/>
    <property type="evidence" value="ECO:0000250"/>
    <property type="project" value="UniProtKB"/>
</dbReference>
<dbReference type="GO" id="GO:0005634">
    <property type="term" value="C:nucleus"/>
    <property type="evidence" value="ECO:0007669"/>
    <property type="project" value="UniProtKB-SubCell"/>
</dbReference>
<dbReference type="GO" id="GO:0008017">
    <property type="term" value="F:microtubule binding"/>
    <property type="evidence" value="ECO:0000250"/>
    <property type="project" value="UniProtKB"/>
</dbReference>
<dbReference type="GO" id="GO:0044877">
    <property type="term" value="F:protein-containing complex binding"/>
    <property type="evidence" value="ECO:0007669"/>
    <property type="project" value="TreeGrafter"/>
</dbReference>
<dbReference type="GO" id="GO:0051315">
    <property type="term" value="P:attachment of mitotic spindle microtubules to kinetochore"/>
    <property type="evidence" value="ECO:0007669"/>
    <property type="project" value="TreeGrafter"/>
</dbReference>
<dbReference type="GO" id="GO:0051301">
    <property type="term" value="P:cell division"/>
    <property type="evidence" value="ECO:0007669"/>
    <property type="project" value="UniProtKB-KW"/>
</dbReference>
<dbReference type="GO" id="GO:0051383">
    <property type="term" value="P:kinetochore organization"/>
    <property type="evidence" value="ECO:0007669"/>
    <property type="project" value="TreeGrafter"/>
</dbReference>
<dbReference type="GO" id="GO:0045132">
    <property type="term" value="P:meiotic chromosome segregation"/>
    <property type="evidence" value="ECO:0007669"/>
    <property type="project" value="TreeGrafter"/>
</dbReference>
<dbReference type="GO" id="GO:0007052">
    <property type="term" value="P:mitotic spindle organization"/>
    <property type="evidence" value="ECO:0007669"/>
    <property type="project" value="TreeGrafter"/>
</dbReference>
<dbReference type="Gene3D" id="1.10.287.1490">
    <property type="match status" value="1"/>
</dbReference>
<dbReference type="Gene3D" id="1.10.418.60">
    <property type="entry name" value="Ncd80 complex, Nuf2 subunit"/>
    <property type="match status" value="1"/>
</dbReference>
<dbReference type="InterPro" id="IPR005549">
    <property type="entry name" value="Kinetochore_Nuf2_N"/>
</dbReference>
<dbReference type="InterPro" id="IPR038275">
    <property type="entry name" value="Nuf2_N_sf"/>
</dbReference>
<dbReference type="PANTHER" id="PTHR21650:SF2">
    <property type="entry name" value="KINETOCHORE PROTEIN NUF2"/>
    <property type="match status" value="1"/>
</dbReference>
<dbReference type="PANTHER" id="PTHR21650">
    <property type="entry name" value="MEMBRALIN/KINETOCHORE PROTEIN NUF2"/>
    <property type="match status" value="1"/>
</dbReference>
<dbReference type="Pfam" id="PF03800">
    <property type="entry name" value="Nuf2"/>
    <property type="match status" value="1"/>
</dbReference>
<reference key="1">
    <citation type="journal article" date="2001" name="Nature">
        <title>Genome sequence and gene compaction of the eukaryote parasite Encephalitozoon cuniculi.</title>
        <authorList>
            <person name="Katinka M.D."/>
            <person name="Duprat S."/>
            <person name="Cornillot E."/>
            <person name="Metenier G."/>
            <person name="Thomarat F."/>
            <person name="Prensier G."/>
            <person name="Barbe V."/>
            <person name="Peyretaillade E."/>
            <person name="Brottier P."/>
            <person name="Wincker P."/>
            <person name="Delbac F."/>
            <person name="El Alaoui H."/>
            <person name="Peyret P."/>
            <person name="Saurin W."/>
            <person name="Gouy M."/>
            <person name="Weissenbach J."/>
            <person name="Vivares C.P."/>
        </authorList>
    </citation>
    <scope>NUCLEOTIDE SEQUENCE [LARGE SCALE GENOMIC DNA]</scope>
    <source>
        <strain>GB-M1</strain>
    </source>
</reference>
<evidence type="ECO:0000250" key="1"/>
<evidence type="ECO:0000255" key="2"/>
<evidence type="ECO:0000305" key="3"/>
<gene>
    <name type="primary">NUF2</name>
    <name type="ordered locus">ECU09_1690</name>
</gene>
<sequence length="439" mass="50906">MQKRNVYAVPDLPVKEIMQYFSEMEINIKASDILKPTPQSTQRIYEVLLEVYCGVKTSDLLPRINSGESIEAFEESLSCILLQKRMSGFLKRIGIDNFGLRDLVPDSRRLIGILSVVVNFSMFRDNKRHVYERVCQMNDEKLLLKNEIDEKVHNAKKELERCERDARKSIEEAKGVEEEISLLESELKDFYRHQRALVQETERSKTERNEYSDKLSSLKLMVLNLNQEITCLKTQIVSDPTKLMELLDEMRCLIAKESEIMKGLEVKRVGLKEKIEFMQVLKEDTMKAITLAISNREADKTIDKTNREISELEVQMKNLDSGINALKIRLNHVSRQISHIESKIFNLQDNDKRCSEEISAKLEKLKSNYGVVSDERNSIRGKIEENVRLTKSIEYELVKRRNEHANDITAIQSALCRLKDDVFNYFAEAKGIIDKTMSD</sequence>
<accession>Q8SQK7</accession>
<proteinExistence type="inferred from homology"/>
<protein>
    <recommendedName>
        <fullName>Probable kinetochore protein NUF2</fullName>
    </recommendedName>
</protein>